<protein>
    <recommendedName>
        <fullName evidence="1">Phosphate import ATP-binding protein PstB</fullName>
        <ecNumber evidence="1">7.3.2.1</ecNumber>
    </recommendedName>
    <alternativeName>
        <fullName evidence="1">ABC phosphate transporter</fullName>
    </alternativeName>
    <alternativeName>
        <fullName evidence="1">Phosphate-transporting ATPase</fullName>
    </alternativeName>
</protein>
<proteinExistence type="inferred from homology"/>
<feature type="chain" id="PRO_0000272493" description="Phosphate import ATP-binding protein PstB">
    <location>
        <begin position="1"/>
        <end position="269"/>
    </location>
</feature>
<feature type="domain" description="ABC transporter" evidence="1">
    <location>
        <begin position="14"/>
        <end position="253"/>
    </location>
</feature>
<feature type="binding site" evidence="1">
    <location>
        <begin position="46"/>
        <end position="53"/>
    </location>
    <ligand>
        <name>ATP</name>
        <dbReference type="ChEBI" id="CHEBI:30616"/>
    </ligand>
</feature>
<name>PSTB_PROM9</name>
<keyword id="KW-0067">ATP-binding</keyword>
<keyword id="KW-0997">Cell inner membrane</keyword>
<keyword id="KW-1003">Cell membrane</keyword>
<keyword id="KW-0472">Membrane</keyword>
<keyword id="KW-0547">Nucleotide-binding</keyword>
<keyword id="KW-0592">Phosphate transport</keyword>
<keyword id="KW-1278">Translocase</keyword>
<keyword id="KW-0813">Transport</keyword>
<dbReference type="EC" id="7.3.2.1" evidence="1"/>
<dbReference type="EMBL" id="CP000111">
    <property type="protein sequence ID" value="ABB49789.1"/>
    <property type="molecule type" value="Genomic_DNA"/>
</dbReference>
<dbReference type="RefSeq" id="WP_011376284.1">
    <property type="nucleotide sequence ID" value="NC_007577.1"/>
</dbReference>
<dbReference type="SMR" id="Q31BF6"/>
<dbReference type="STRING" id="74546.PMT9312_0729"/>
<dbReference type="KEGG" id="pmi:PMT9312_0729"/>
<dbReference type="eggNOG" id="COG1117">
    <property type="taxonomic scope" value="Bacteria"/>
</dbReference>
<dbReference type="HOGENOM" id="CLU_000604_1_22_3"/>
<dbReference type="OrthoDB" id="9802185at2"/>
<dbReference type="Proteomes" id="UP000002715">
    <property type="component" value="Chromosome"/>
</dbReference>
<dbReference type="GO" id="GO:0005886">
    <property type="term" value="C:plasma membrane"/>
    <property type="evidence" value="ECO:0007669"/>
    <property type="project" value="UniProtKB-SubCell"/>
</dbReference>
<dbReference type="GO" id="GO:0005524">
    <property type="term" value="F:ATP binding"/>
    <property type="evidence" value="ECO:0007669"/>
    <property type="project" value="UniProtKB-KW"/>
</dbReference>
<dbReference type="GO" id="GO:0016887">
    <property type="term" value="F:ATP hydrolysis activity"/>
    <property type="evidence" value="ECO:0007669"/>
    <property type="project" value="InterPro"/>
</dbReference>
<dbReference type="GO" id="GO:0015415">
    <property type="term" value="F:ATPase-coupled phosphate ion transmembrane transporter activity"/>
    <property type="evidence" value="ECO:0007669"/>
    <property type="project" value="UniProtKB-EC"/>
</dbReference>
<dbReference type="GO" id="GO:0035435">
    <property type="term" value="P:phosphate ion transmembrane transport"/>
    <property type="evidence" value="ECO:0007669"/>
    <property type="project" value="InterPro"/>
</dbReference>
<dbReference type="CDD" id="cd03260">
    <property type="entry name" value="ABC_PstB_phosphate_transporter"/>
    <property type="match status" value="1"/>
</dbReference>
<dbReference type="Gene3D" id="3.40.50.300">
    <property type="entry name" value="P-loop containing nucleotide triphosphate hydrolases"/>
    <property type="match status" value="1"/>
</dbReference>
<dbReference type="InterPro" id="IPR003593">
    <property type="entry name" value="AAA+_ATPase"/>
</dbReference>
<dbReference type="InterPro" id="IPR003439">
    <property type="entry name" value="ABC_transporter-like_ATP-bd"/>
</dbReference>
<dbReference type="InterPro" id="IPR017871">
    <property type="entry name" value="ABC_transporter-like_CS"/>
</dbReference>
<dbReference type="InterPro" id="IPR027417">
    <property type="entry name" value="P-loop_NTPase"/>
</dbReference>
<dbReference type="InterPro" id="IPR005670">
    <property type="entry name" value="PstB-like"/>
</dbReference>
<dbReference type="NCBIfam" id="TIGR00972">
    <property type="entry name" value="3a0107s01c2"/>
    <property type="match status" value="1"/>
</dbReference>
<dbReference type="PANTHER" id="PTHR43423">
    <property type="entry name" value="ABC TRANSPORTER I FAMILY MEMBER 17"/>
    <property type="match status" value="1"/>
</dbReference>
<dbReference type="PANTHER" id="PTHR43423:SF1">
    <property type="entry name" value="ABC TRANSPORTER I FAMILY MEMBER 17"/>
    <property type="match status" value="1"/>
</dbReference>
<dbReference type="Pfam" id="PF00005">
    <property type="entry name" value="ABC_tran"/>
    <property type="match status" value="1"/>
</dbReference>
<dbReference type="SMART" id="SM00382">
    <property type="entry name" value="AAA"/>
    <property type="match status" value="1"/>
</dbReference>
<dbReference type="SUPFAM" id="SSF52540">
    <property type="entry name" value="P-loop containing nucleoside triphosphate hydrolases"/>
    <property type="match status" value="1"/>
</dbReference>
<dbReference type="PROSITE" id="PS00211">
    <property type="entry name" value="ABC_TRANSPORTER_1"/>
    <property type="match status" value="1"/>
</dbReference>
<dbReference type="PROSITE" id="PS50893">
    <property type="entry name" value="ABC_TRANSPORTER_2"/>
    <property type="match status" value="1"/>
</dbReference>
<dbReference type="PROSITE" id="PS51238">
    <property type="entry name" value="PSTB"/>
    <property type="match status" value="1"/>
</dbReference>
<organism>
    <name type="scientific">Prochlorococcus marinus (strain MIT 9312)</name>
    <dbReference type="NCBI Taxonomy" id="74546"/>
    <lineage>
        <taxon>Bacteria</taxon>
        <taxon>Bacillati</taxon>
        <taxon>Cyanobacteriota</taxon>
        <taxon>Cyanophyceae</taxon>
        <taxon>Synechococcales</taxon>
        <taxon>Prochlorococcaceae</taxon>
        <taxon>Prochlorococcus</taxon>
    </lineage>
</organism>
<comment type="function">
    <text evidence="1">Part of the ABC transporter complex PstSACB involved in phosphate import. Responsible for energy coupling to the transport system.</text>
</comment>
<comment type="catalytic activity">
    <reaction evidence="1">
        <text>phosphate(out) + ATP + H2O = ADP + 2 phosphate(in) + H(+)</text>
        <dbReference type="Rhea" id="RHEA:24440"/>
        <dbReference type="ChEBI" id="CHEBI:15377"/>
        <dbReference type="ChEBI" id="CHEBI:15378"/>
        <dbReference type="ChEBI" id="CHEBI:30616"/>
        <dbReference type="ChEBI" id="CHEBI:43474"/>
        <dbReference type="ChEBI" id="CHEBI:456216"/>
        <dbReference type="EC" id="7.3.2.1"/>
    </reaction>
</comment>
<comment type="subunit">
    <text evidence="1">The complex is composed of two ATP-binding proteins (PstB), two transmembrane proteins (PstC and PstA) and a solute-binding protein (PstS).</text>
</comment>
<comment type="subcellular location">
    <subcellularLocation>
        <location evidence="1">Cell inner membrane</location>
        <topology evidence="1">Peripheral membrane protein</topology>
    </subcellularLocation>
</comment>
<comment type="similarity">
    <text evidence="1">Belongs to the ABC transporter superfamily. Phosphate importer (TC 3.A.1.7) family.</text>
</comment>
<gene>
    <name evidence="1" type="primary">pstB</name>
    <name type="ordered locus">PMT9312_0729</name>
</gene>
<evidence type="ECO:0000255" key="1">
    <source>
        <dbReference type="HAMAP-Rule" id="MF_01702"/>
    </source>
</evidence>
<accession>Q31BF6</accession>
<sequence>MIKTNKKTPKNIILSLENVSISYGTFEAVRNVFCNFKKGNITSLIGPSGCGKSTVLRSLNRMNDLIPNCSLKGTVLFDGTNIYDKRVDPVEVRRRIGMVFQQPNPFPKSIYENIAFGARINGFTGDMDELVESSLRKAALWDECKDKLNDSGYSLSGGQQQRLCIARTIAIEPEIILMDEPCSALDPISTLKIEETMHELKMNYTIIIVTHNMQQALRVSDMTAFFNAVEYEDGDGGKVGYLAEFNSTKKIFNSPKEKTTQEYISGKFG</sequence>
<reference key="1">
    <citation type="journal article" date="2006" name="Science">
        <title>Genomic islands and the ecology and evolution of Prochlorococcus.</title>
        <authorList>
            <person name="Coleman M.L."/>
            <person name="Sullivan M.B."/>
            <person name="Martiny A.C."/>
            <person name="Steglich C."/>
            <person name="Barry K."/>
            <person name="Delong E.F."/>
            <person name="Chisholm S.W."/>
        </authorList>
    </citation>
    <scope>NUCLEOTIDE SEQUENCE [LARGE SCALE GENOMIC DNA]</scope>
    <source>
        <strain>MIT 9312</strain>
    </source>
</reference>